<name>Y209_ARCFU</name>
<protein>
    <recommendedName>
        <fullName>Uncharacterized protein AF_0209</fullName>
    </recommendedName>
</protein>
<reference key="1">
    <citation type="journal article" date="1997" name="Nature">
        <title>The complete genome sequence of the hyperthermophilic, sulphate-reducing archaeon Archaeoglobus fulgidus.</title>
        <authorList>
            <person name="Klenk H.-P."/>
            <person name="Clayton R.A."/>
            <person name="Tomb J.-F."/>
            <person name="White O."/>
            <person name="Nelson K.E."/>
            <person name="Ketchum K.A."/>
            <person name="Dodson R.J."/>
            <person name="Gwinn M.L."/>
            <person name="Hickey E.K."/>
            <person name="Peterson J.D."/>
            <person name="Richardson D.L."/>
            <person name="Kerlavage A.R."/>
            <person name="Graham D.E."/>
            <person name="Kyrpides N.C."/>
            <person name="Fleischmann R.D."/>
            <person name="Quackenbush J."/>
            <person name="Lee N.H."/>
            <person name="Sutton G.G."/>
            <person name="Gill S.R."/>
            <person name="Kirkness E.F."/>
            <person name="Dougherty B.A."/>
            <person name="McKenney K."/>
            <person name="Adams M.D."/>
            <person name="Loftus B.J."/>
            <person name="Peterson S.N."/>
            <person name="Reich C.I."/>
            <person name="McNeil L.K."/>
            <person name="Badger J.H."/>
            <person name="Glodek A."/>
            <person name="Zhou L."/>
            <person name="Overbeek R."/>
            <person name="Gocayne J.D."/>
            <person name="Weidman J.F."/>
            <person name="McDonald L.A."/>
            <person name="Utterback T.R."/>
            <person name="Cotton M.D."/>
            <person name="Spriggs T."/>
            <person name="Artiach P."/>
            <person name="Kaine B.P."/>
            <person name="Sykes S.M."/>
            <person name="Sadow P.W."/>
            <person name="D'Andrea K.P."/>
            <person name="Bowman C."/>
            <person name="Fujii C."/>
            <person name="Garland S.A."/>
            <person name="Mason T.M."/>
            <person name="Olsen G.J."/>
            <person name="Fraser C.M."/>
            <person name="Smith H.O."/>
            <person name="Woese C.R."/>
            <person name="Venter J.C."/>
        </authorList>
    </citation>
    <scope>NUCLEOTIDE SEQUENCE [LARGE SCALE GENOMIC DNA]</scope>
    <source>
        <strain>ATCC 49558 / DSM 4304 / JCM 9628 / NBRC 100126 / VC-16</strain>
    </source>
</reference>
<comment type="similarity">
    <text evidence="1">Belongs to the UbiD family.</text>
</comment>
<proteinExistence type="inferred from homology"/>
<evidence type="ECO:0000305" key="1"/>
<organism>
    <name type="scientific">Archaeoglobus fulgidus (strain ATCC 49558 / DSM 4304 / JCM 9628 / NBRC 100126 / VC-16)</name>
    <dbReference type="NCBI Taxonomy" id="224325"/>
    <lineage>
        <taxon>Archaea</taxon>
        <taxon>Methanobacteriati</taxon>
        <taxon>Methanobacteriota</taxon>
        <taxon>Archaeoglobi</taxon>
        <taxon>Archaeoglobales</taxon>
        <taxon>Archaeoglobaceae</taxon>
        <taxon>Archaeoglobus</taxon>
    </lineage>
</organism>
<feature type="chain" id="PRO_0000157381" description="Uncharacterized protein AF_0209">
    <location>
        <begin position="1"/>
        <end position="481"/>
    </location>
</feature>
<gene>
    <name type="ordered locus">AF_0209</name>
</gene>
<keyword id="KW-1185">Reference proteome</keyword>
<sequence>MAYEDLREFIGRLEDKGELARVKHEVSPILEMSEVADRTVKAGGKALLFERPKGYDIPVFMNAFGTERRMKLALEVERLEEIGERLLSALEFRPSSFMDALKGVGMLKDFMSFIPKKTGKAPCKEVVAESLDKFPILKCWPKDAGRFITFPVVITKDPETGEMNAGMYRMQVFDGKTTGMHWQIHKHGAEHFRKMAEKGGGKIEVAVAIGVDPATLYAATAPLPSGISEFMFAGFIRKERLKVTECETVDLLVPANAEIILEGYVRVDEMRVEGPFGDHTGYYTPPEPYPVFHITHITHRENPIYHATVVGKPPMEDAWLGKATERIFLPILRMMHPEIVDINLPVEGAFHNLAIVSIKKRYPGQAKKVMYAIWGTGMLSLTKIVVVVDDDVNVHDMREVVWAVTSRFDPARDVVILPPSPTDSLDHSAYIPNLAGKLGIDATKKWRDEGYEREWPDVVEMDAETKRKVDAIWNEIRNMVL</sequence>
<dbReference type="EMBL" id="AE000782">
    <property type="protein sequence ID" value="AAB91023.1"/>
    <property type="molecule type" value="Genomic_DNA"/>
</dbReference>
<dbReference type="PIR" id="A69276">
    <property type="entry name" value="A69276"/>
</dbReference>
<dbReference type="RefSeq" id="WP_010877720.1">
    <property type="nucleotide sequence ID" value="NC_000917.1"/>
</dbReference>
<dbReference type="SMR" id="O30030"/>
<dbReference type="STRING" id="224325.AF_0209"/>
<dbReference type="PaxDb" id="224325-AF_0209"/>
<dbReference type="EnsemblBacteria" id="AAB91023">
    <property type="protein sequence ID" value="AAB91023"/>
    <property type="gene ID" value="AF_0209"/>
</dbReference>
<dbReference type="GeneID" id="1483420"/>
<dbReference type="KEGG" id="afu:AF_0209"/>
<dbReference type="eggNOG" id="arCOG01671">
    <property type="taxonomic scope" value="Archaea"/>
</dbReference>
<dbReference type="HOGENOM" id="CLU_023348_4_1_2"/>
<dbReference type="OrthoDB" id="8480at2157"/>
<dbReference type="PhylomeDB" id="O30030"/>
<dbReference type="Proteomes" id="UP000002199">
    <property type="component" value="Chromosome"/>
</dbReference>
<dbReference type="GO" id="GO:0005829">
    <property type="term" value="C:cytosol"/>
    <property type="evidence" value="ECO:0007669"/>
    <property type="project" value="TreeGrafter"/>
</dbReference>
<dbReference type="GO" id="GO:0008694">
    <property type="term" value="F:3-octaprenyl-4-hydroxybenzoate carboxy-lyase activity"/>
    <property type="evidence" value="ECO:0007669"/>
    <property type="project" value="TreeGrafter"/>
</dbReference>
<dbReference type="GO" id="GO:0006744">
    <property type="term" value="P:ubiquinone biosynthetic process"/>
    <property type="evidence" value="ECO:0007669"/>
    <property type="project" value="TreeGrafter"/>
</dbReference>
<dbReference type="FunFam" id="3.40.1670.10:FF:000002">
    <property type="entry name" value="Menaquinone biosynthesis decarboxylase"/>
    <property type="match status" value="1"/>
</dbReference>
<dbReference type="Gene3D" id="1.20.5.570">
    <property type="entry name" value="Single helix bin"/>
    <property type="match status" value="1"/>
</dbReference>
<dbReference type="Gene3D" id="3.40.1670.10">
    <property type="entry name" value="UbiD C-terminal domain-like"/>
    <property type="match status" value="1"/>
</dbReference>
<dbReference type="InterPro" id="IPR022390">
    <property type="entry name" value="HBDC"/>
</dbReference>
<dbReference type="InterPro" id="IPR002830">
    <property type="entry name" value="UbiD"/>
</dbReference>
<dbReference type="InterPro" id="IPR049381">
    <property type="entry name" value="UbiD-like_C"/>
</dbReference>
<dbReference type="InterPro" id="IPR049383">
    <property type="entry name" value="UbiD-like_N"/>
</dbReference>
<dbReference type="InterPro" id="IPR048304">
    <property type="entry name" value="UbiD_Rift_dom"/>
</dbReference>
<dbReference type="NCBIfam" id="TIGR03701">
    <property type="entry name" value="mena_SCO4490"/>
    <property type="match status" value="1"/>
</dbReference>
<dbReference type="NCBIfam" id="TIGR00148">
    <property type="entry name" value="UbiD family decarboxylase"/>
    <property type="match status" value="1"/>
</dbReference>
<dbReference type="PANTHER" id="PTHR30108">
    <property type="entry name" value="3-OCTAPRENYL-4-HYDROXYBENZOATE CARBOXY-LYASE-RELATED"/>
    <property type="match status" value="1"/>
</dbReference>
<dbReference type="PANTHER" id="PTHR30108:SF17">
    <property type="entry name" value="FERULIC ACID DECARBOXYLASE 1"/>
    <property type="match status" value="1"/>
</dbReference>
<dbReference type="Pfam" id="PF01977">
    <property type="entry name" value="UbiD"/>
    <property type="match status" value="1"/>
</dbReference>
<dbReference type="Pfam" id="PF20696">
    <property type="entry name" value="UbiD_C"/>
    <property type="match status" value="1"/>
</dbReference>
<dbReference type="Pfam" id="PF20695">
    <property type="entry name" value="UbiD_N"/>
    <property type="match status" value="1"/>
</dbReference>
<dbReference type="SUPFAM" id="SSF50475">
    <property type="entry name" value="FMN-binding split barrel"/>
    <property type="match status" value="1"/>
</dbReference>
<dbReference type="SUPFAM" id="SSF143968">
    <property type="entry name" value="UbiD C-terminal domain-like"/>
    <property type="match status" value="1"/>
</dbReference>
<accession>O30030</accession>